<keyword id="KW-0067">ATP-binding</keyword>
<keyword id="KW-0963">Cytoplasm</keyword>
<keyword id="KW-0315">Glutamine amidotransferase</keyword>
<keyword id="KW-0436">Ligase</keyword>
<keyword id="KW-0460">Magnesium</keyword>
<keyword id="KW-0479">Metal-binding</keyword>
<keyword id="KW-0547">Nucleotide-binding</keyword>
<keyword id="KW-0658">Purine biosynthesis</keyword>
<keyword id="KW-1185">Reference proteome</keyword>
<sequence>MRILRGSPALSEFRVNKLLELCRELSLPVTGIYAEFAHFADVTAELDASEVQKLEKLLTYGPTIEEHEPEGLLLLTTPRPGTISPWSSKSTDIAHNCGLDKIARLERGTAFYIERSEELSELQLIELKAILHDRMMEVVFTDFESASALFAVSEPAPYTEVDLLTGGRKALEDANVTLGLALAEDEIDYLLESFTEKLERNPTDIELMMFAQANSEHCRHKIFNADWTIDGVKQEKSLFKMIKNTFEVTPDNVLSAYKDNAAVMTGSEVGRFFPDPETRQYNYHQEKTHILMKVETHNHPTAISPWPGASTGSGGEIRDEGATGIGGKPKAGLVAFSVSNLKIPNFVQPWETDFGKPSRIVTALDIMLEGPLGGAAFNNEFGRPNLLGYFRTYEEKVNSHAGEEVRGYHKPIMLAGGLGNIRDEHVQKKEIPVGASLIVLGGPAMNIGLGGGAASSMDSGSSSEDLDFASVQRENPEMERRCQEVIDRCWQLGDANPIAFIHDVGAGGISNALPELVDDGERGGIFNLRDVPNDEPGMSPLEIWCNESQERYVMAVADKDMATFDAICKRERAPYAVVGKATEERELKLEDSHFDNTPIDMPMDILLGKTPKMHRDAKTLKANNPAIDRSGIEMNEAVDRVLRLPTVAEKTFLITIGDRSVTGLVARDQMVGPWQVPVANCAVTAASYDSYHGEAMSLGERTPVALLDFGASARLAVGEAITNIAATNIGDIKHIKLSANWMSPAGHPGEDAGLYEAVKAVGEELCPALGLTIPVGKDSMSMKTKWEENGEQKEVTSPLSLVITAFARVEDVRKTITPQLRTPDNLEGLGDTSLVLIDLGNGKNRLGATALAQVYKQLGDKPADVDNAAQLKGFYEGVQALVANDQVVAYHDKGDGGLFVTLAEMAFAGHCGVNANIEALGEDTLAALFNEELGAVIQVRNDDLDAVLSTLAANGLEACSHVIGSVEASDELVIKSGESVVIERNRTELRTIWAETTHKMQGLRDNPACADQEHEAKKDNSDPGLNVKLSFDVNEDIAAPFINTGAKPKMAILREQGVNSHVEMAAAFDRAGFEATDIHMSDILTGQAVLEEYNGLVACGGFSYGDVLGAGEGWAKSVLFNDSTRDQFENFFKREDTFSLGVCNGCQMLSNLRDLIPGAEYWPRFVRNESERFEARFSLVEVQKSDSVFFNGMEGSRMPIAVSHGEGRVEVRDNDHLNAIENSGTVALRYVDNHGNPTQQYPNNPNGSPNAITGLTTTDGRVTIMMPHPERVFRTVANSWSPEGWGENGAWMRMFQNARKNIG</sequence>
<protein>
    <recommendedName>
        <fullName evidence="1">Phosphoribosylformylglycinamidine synthase</fullName>
        <shortName evidence="1">FGAM synthase</shortName>
        <shortName evidence="1">FGAMS</shortName>
        <ecNumber evidence="1">6.3.5.3</ecNumber>
    </recommendedName>
    <alternativeName>
        <fullName evidence="1">Formylglycinamide ribonucleotide amidotransferase</fullName>
        <shortName evidence="1">FGAR amidotransferase</shortName>
        <shortName evidence="1">FGAR-AT</shortName>
    </alternativeName>
</protein>
<organism>
    <name type="scientific">Aliivibrio fischeri (strain ATCC 700601 / ES114)</name>
    <name type="common">Vibrio fischeri</name>
    <dbReference type="NCBI Taxonomy" id="312309"/>
    <lineage>
        <taxon>Bacteria</taxon>
        <taxon>Pseudomonadati</taxon>
        <taxon>Pseudomonadota</taxon>
        <taxon>Gammaproteobacteria</taxon>
        <taxon>Vibrionales</taxon>
        <taxon>Vibrionaceae</taxon>
        <taxon>Aliivibrio</taxon>
    </lineage>
</organism>
<name>PUR4_ALIF1</name>
<reference key="1">
    <citation type="journal article" date="2005" name="Proc. Natl. Acad. Sci. U.S.A.">
        <title>Complete genome sequence of Vibrio fischeri: a symbiotic bacterium with pathogenic congeners.</title>
        <authorList>
            <person name="Ruby E.G."/>
            <person name="Urbanowski M."/>
            <person name="Campbell J."/>
            <person name="Dunn A."/>
            <person name="Faini M."/>
            <person name="Gunsalus R."/>
            <person name="Lostroh P."/>
            <person name="Lupp C."/>
            <person name="McCann J."/>
            <person name="Millikan D."/>
            <person name="Schaefer A."/>
            <person name="Stabb E."/>
            <person name="Stevens A."/>
            <person name="Visick K."/>
            <person name="Whistler C."/>
            <person name="Greenberg E.P."/>
        </authorList>
    </citation>
    <scope>NUCLEOTIDE SEQUENCE [LARGE SCALE GENOMIC DNA]</scope>
    <source>
        <strain>ATCC 700601 / ES114</strain>
    </source>
</reference>
<proteinExistence type="inferred from homology"/>
<dbReference type="EC" id="6.3.5.3" evidence="1"/>
<dbReference type="EMBL" id="CP000020">
    <property type="protein sequence ID" value="AAW85147.1"/>
    <property type="molecule type" value="Genomic_DNA"/>
</dbReference>
<dbReference type="RefSeq" id="WP_011261382.1">
    <property type="nucleotide sequence ID" value="NC_006840.2"/>
</dbReference>
<dbReference type="RefSeq" id="YP_204035.1">
    <property type="nucleotide sequence ID" value="NC_006840.2"/>
</dbReference>
<dbReference type="SMR" id="Q5E749"/>
<dbReference type="STRING" id="312309.VF_0652"/>
<dbReference type="MEROPS" id="C56.972"/>
<dbReference type="EnsemblBacteria" id="AAW85147">
    <property type="protein sequence ID" value="AAW85147"/>
    <property type="gene ID" value="VF_0652"/>
</dbReference>
<dbReference type="GeneID" id="54163307"/>
<dbReference type="KEGG" id="vfi:VF_0652"/>
<dbReference type="PATRIC" id="fig|312309.11.peg.645"/>
<dbReference type="eggNOG" id="COG0046">
    <property type="taxonomic scope" value="Bacteria"/>
</dbReference>
<dbReference type="eggNOG" id="COG0047">
    <property type="taxonomic scope" value="Bacteria"/>
</dbReference>
<dbReference type="HOGENOM" id="CLU_001031_0_2_6"/>
<dbReference type="OrthoDB" id="9804441at2"/>
<dbReference type="UniPathway" id="UPA00074">
    <property type="reaction ID" value="UER00128"/>
</dbReference>
<dbReference type="Proteomes" id="UP000000537">
    <property type="component" value="Chromosome I"/>
</dbReference>
<dbReference type="GO" id="GO:0005737">
    <property type="term" value="C:cytoplasm"/>
    <property type="evidence" value="ECO:0007669"/>
    <property type="project" value="UniProtKB-SubCell"/>
</dbReference>
<dbReference type="GO" id="GO:0005524">
    <property type="term" value="F:ATP binding"/>
    <property type="evidence" value="ECO:0007669"/>
    <property type="project" value="UniProtKB-UniRule"/>
</dbReference>
<dbReference type="GO" id="GO:0046872">
    <property type="term" value="F:metal ion binding"/>
    <property type="evidence" value="ECO:0007669"/>
    <property type="project" value="UniProtKB-KW"/>
</dbReference>
<dbReference type="GO" id="GO:0004642">
    <property type="term" value="F:phosphoribosylformylglycinamidine synthase activity"/>
    <property type="evidence" value="ECO:0007669"/>
    <property type="project" value="UniProtKB-UniRule"/>
</dbReference>
<dbReference type="GO" id="GO:0006189">
    <property type="term" value="P:'de novo' IMP biosynthetic process"/>
    <property type="evidence" value="ECO:0007669"/>
    <property type="project" value="UniProtKB-UniRule"/>
</dbReference>
<dbReference type="CDD" id="cd01740">
    <property type="entry name" value="GATase1_FGAR_AT"/>
    <property type="match status" value="1"/>
</dbReference>
<dbReference type="CDD" id="cd02203">
    <property type="entry name" value="PurL_repeat1"/>
    <property type="match status" value="1"/>
</dbReference>
<dbReference type="FunFam" id="1.10.8.750:FF:000002">
    <property type="entry name" value="Phosphoribosylformylglycinamidine synthase"/>
    <property type="match status" value="1"/>
</dbReference>
<dbReference type="FunFam" id="3.30.1330.10:FF:000002">
    <property type="entry name" value="Phosphoribosylformylglycinamidine synthase"/>
    <property type="match status" value="1"/>
</dbReference>
<dbReference type="FunFam" id="3.30.1330.10:FF:000005">
    <property type="entry name" value="Phosphoribosylformylglycinamidine synthase"/>
    <property type="match status" value="1"/>
</dbReference>
<dbReference type="FunFam" id="3.40.50.880:FF:000008">
    <property type="entry name" value="Phosphoribosylformylglycinamidine synthase"/>
    <property type="match status" value="1"/>
</dbReference>
<dbReference type="FunFam" id="3.90.650.10:FF:000002">
    <property type="entry name" value="Phosphoribosylformylglycinamidine synthase"/>
    <property type="match status" value="1"/>
</dbReference>
<dbReference type="FunFam" id="3.90.650.10:FF:000005">
    <property type="entry name" value="Phosphoribosylformylglycinamidine synthase"/>
    <property type="match status" value="1"/>
</dbReference>
<dbReference type="Gene3D" id="3.40.50.880">
    <property type="match status" value="1"/>
</dbReference>
<dbReference type="Gene3D" id="1.10.8.750">
    <property type="entry name" value="Phosphoribosylformylglycinamidine synthase, linker domain"/>
    <property type="match status" value="1"/>
</dbReference>
<dbReference type="Gene3D" id="3.90.650.10">
    <property type="entry name" value="PurM-like C-terminal domain"/>
    <property type="match status" value="2"/>
</dbReference>
<dbReference type="Gene3D" id="3.30.1330.10">
    <property type="entry name" value="PurM-like, N-terminal domain"/>
    <property type="match status" value="2"/>
</dbReference>
<dbReference type="HAMAP" id="MF_00419">
    <property type="entry name" value="PurL_1"/>
    <property type="match status" value="1"/>
</dbReference>
<dbReference type="InterPro" id="IPR029062">
    <property type="entry name" value="Class_I_gatase-like"/>
</dbReference>
<dbReference type="InterPro" id="IPR040707">
    <property type="entry name" value="FGAR-AT_N"/>
</dbReference>
<dbReference type="InterPro" id="IPR055181">
    <property type="entry name" value="FGAR-AT_PurM_N-like"/>
</dbReference>
<dbReference type="InterPro" id="IPR010073">
    <property type="entry name" value="PurL_large"/>
</dbReference>
<dbReference type="InterPro" id="IPR041609">
    <property type="entry name" value="PurL_linker"/>
</dbReference>
<dbReference type="InterPro" id="IPR010918">
    <property type="entry name" value="PurM-like_C_dom"/>
</dbReference>
<dbReference type="InterPro" id="IPR036676">
    <property type="entry name" value="PurM-like_C_sf"/>
</dbReference>
<dbReference type="InterPro" id="IPR036921">
    <property type="entry name" value="PurM-like_N_sf"/>
</dbReference>
<dbReference type="InterPro" id="IPR036604">
    <property type="entry name" value="PurS-like_sf"/>
</dbReference>
<dbReference type="NCBIfam" id="TIGR01735">
    <property type="entry name" value="FGAM_synt"/>
    <property type="match status" value="1"/>
</dbReference>
<dbReference type="NCBIfam" id="NF003672">
    <property type="entry name" value="PRK05297.1"/>
    <property type="match status" value="1"/>
</dbReference>
<dbReference type="PANTHER" id="PTHR10099">
    <property type="entry name" value="PHOSPHORIBOSYLFORMYLGLYCINAMIDINE SYNTHASE"/>
    <property type="match status" value="1"/>
</dbReference>
<dbReference type="PANTHER" id="PTHR10099:SF1">
    <property type="entry name" value="PHOSPHORIBOSYLFORMYLGLYCINAMIDINE SYNTHASE"/>
    <property type="match status" value="1"/>
</dbReference>
<dbReference type="Pfam" id="PF02769">
    <property type="entry name" value="AIRS_C"/>
    <property type="match status" value="2"/>
</dbReference>
<dbReference type="Pfam" id="PF18072">
    <property type="entry name" value="FGAR-AT_linker"/>
    <property type="match status" value="1"/>
</dbReference>
<dbReference type="Pfam" id="PF18076">
    <property type="entry name" value="FGAR-AT_N"/>
    <property type="match status" value="1"/>
</dbReference>
<dbReference type="Pfam" id="PF22689">
    <property type="entry name" value="FGAR-AT_PurM_N-like"/>
    <property type="match status" value="1"/>
</dbReference>
<dbReference type="Pfam" id="PF13507">
    <property type="entry name" value="GATase_5"/>
    <property type="match status" value="1"/>
</dbReference>
<dbReference type="SMART" id="SM01211">
    <property type="entry name" value="GATase_5"/>
    <property type="match status" value="1"/>
</dbReference>
<dbReference type="SUPFAM" id="SSF52317">
    <property type="entry name" value="Class I glutamine amidotransferase-like"/>
    <property type="match status" value="1"/>
</dbReference>
<dbReference type="SUPFAM" id="SSF109736">
    <property type="entry name" value="FGAM synthase PurL, linker domain"/>
    <property type="match status" value="1"/>
</dbReference>
<dbReference type="SUPFAM" id="SSF56042">
    <property type="entry name" value="PurM C-terminal domain-like"/>
    <property type="match status" value="2"/>
</dbReference>
<dbReference type="SUPFAM" id="SSF55326">
    <property type="entry name" value="PurM N-terminal domain-like"/>
    <property type="match status" value="2"/>
</dbReference>
<dbReference type="SUPFAM" id="SSF82697">
    <property type="entry name" value="PurS-like"/>
    <property type="match status" value="1"/>
</dbReference>
<dbReference type="PROSITE" id="PS51273">
    <property type="entry name" value="GATASE_TYPE_1"/>
    <property type="match status" value="1"/>
</dbReference>
<feature type="chain" id="PRO_0000264601" description="Phosphoribosylformylglycinamidine synthase">
    <location>
        <begin position="1"/>
        <end position="1303"/>
    </location>
</feature>
<feature type="domain" description="Glutamine amidotransferase type-1" evidence="1">
    <location>
        <begin position="1050"/>
        <end position="1303"/>
    </location>
</feature>
<feature type="region of interest" description="Disordered" evidence="2">
    <location>
        <begin position="1003"/>
        <end position="1023"/>
    </location>
</feature>
<feature type="compositionally biased region" description="Basic and acidic residues" evidence="2">
    <location>
        <begin position="1011"/>
        <end position="1021"/>
    </location>
</feature>
<feature type="active site" description="Nucleophile" evidence="1">
    <location>
        <position position="1143"/>
    </location>
</feature>
<feature type="active site" evidence="1">
    <location>
        <position position="1268"/>
    </location>
</feature>
<feature type="active site" evidence="1">
    <location>
        <position position="1270"/>
    </location>
</feature>
<feature type="binding site" evidence="1">
    <location>
        <begin position="308"/>
        <end position="319"/>
    </location>
    <ligand>
        <name>ATP</name>
        <dbReference type="ChEBI" id="CHEBI:30616"/>
    </ligand>
</feature>
<feature type="binding site" evidence="1">
    <location>
        <position position="679"/>
    </location>
    <ligand>
        <name>ATP</name>
        <dbReference type="ChEBI" id="CHEBI:30616"/>
    </ligand>
</feature>
<feature type="binding site" evidence="1">
    <location>
        <position position="719"/>
    </location>
    <ligand>
        <name>Mg(2+)</name>
        <dbReference type="ChEBI" id="CHEBI:18420"/>
    </ligand>
</feature>
<feature type="binding site" evidence="1">
    <location>
        <position position="723"/>
    </location>
    <ligand>
        <name>Mg(2+)</name>
        <dbReference type="ChEBI" id="CHEBI:18420"/>
    </ligand>
</feature>
<feature type="binding site" evidence="1">
    <location>
        <position position="892"/>
    </location>
    <ligand>
        <name>Mg(2+)</name>
        <dbReference type="ChEBI" id="CHEBI:18420"/>
    </ligand>
</feature>
<accession>Q5E749</accession>
<evidence type="ECO:0000255" key="1">
    <source>
        <dbReference type="HAMAP-Rule" id="MF_00419"/>
    </source>
</evidence>
<evidence type="ECO:0000256" key="2">
    <source>
        <dbReference type="SAM" id="MobiDB-lite"/>
    </source>
</evidence>
<comment type="function">
    <text evidence="1">Phosphoribosylformylglycinamidine synthase involved in the purines biosynthetic pathway. Catalyzes the ATP-dependent conversion of formylglycinamide ribonucleotide (FGAR) and glutamine to yield formylglycinamidine ribonucleotide (FGAM) and glutamate.</text>
</comment>
<comment type="catalytic activity">
    <reaction evidence="1">
        <text>N(2)-formyl-N(1)-(5-phospho-beta-D-ribosyl)glycinamide + L-glutamine + ATP + H2O = 2-formamido-N(1)-(5-O-phospho-beta-D-ribosyl)acetamidine + L-glutamate + ADP + phosphate + H(+)</text>
        <dbReference type="Rhea" id="RHEA:17129"/>
        <dbReference type="ChEBI" id="CHEBI:15377"/>
        <dbReference type="ChEBI" id="CHEBI:15378"/>
        <dbReference type="ChEBI" id="CHEBI:29985"/>
        <dbReference type="ChEBI" id="CHEBI:30616"/>
        <dbReference type="ChEBI" id="CHEBI:43474"/>
        <dbReference type="ChEBI" id="CHEBI:58359"/>
        <dbReference type="ChEBI" id="CHEBI:147286"/>
        <dbReference type="ChEBI" id="CHEBI:147287"/>
        <dbReference type="ChEBI" id="CHEBI:456216"/>
        <dbReference type="EC" id="6.3.5.3"/>
    </reaction>
</comment>
<comment type="pathway">
    <text evidence="1">Purine metabolism; IMP biosynthesis via de novo pathway; 5-amino-1-(5-phospho-D-ribosyl)imidazole from N(2)-formyl-N(1)-(5-phospho-D-ribosyl)glycinamide: step 1/2.</text>
</comment>
<comment type="subunit">
    <text evidence="1">Monomer.</text>
</comment>
<comment type="subcellular location">
    <subcellularLocation>
        <location evidence="1">Cytoplasm</location>
    </subcellularLocation>
</comment>
<comment type="similarity">
    <text evidence="1">In the N-terminal section; belongs to the FGAMS family.</text>
</comment>
<gene>
    <name evidence="1" type="primary">purL</name>
    <name type="ordered locus">VF_0652</name>
</gene>